<sequence length="230" mass="25342">MAQGLIEVERKFLPGPGTEERLQELGGTLEHRVTFRDTYYDTPELSLMQADHWLRRREDSGWELKCPGAAGVLGHHTEYKELTAEPTIVAQLCKVLGADGLGAGDVAAVLDPLGLQEVASFVTKRSAWKLVLLGTDEEEPQLKVDLGTADFGYAVGEVEALVHEEAEVPAALEKIHRLSSMLGVPAQETAPAKLIVYLQRFRPQNYQRLLEVNSSKQRPQATEDPDNCLG</sequence>
<name>THTPA_MACFA</name>
<gene>
    <name type="primary">THTPA</name>
    <name type="ORF">QflA-12514</name>
</gene>
<feature type="initiator methionine" description="Removed" evidence="2">
    <location>
        <position position="1"/>
    </location>
</feature>
<feature type="chain" id="PRO_0000221491" description="Thiamine-triphosphatase">
    <location>
        <begin position="2"/>
        <end position="230"/>
    </location>
</feature>
<feature type="domain" description="CYTH" evidence="3">
    <location>
        <begin position="5"/>
        <end position="201"/>
    </location>
</feature>
<feature type="binding site" evidence="1">
    <location>
        <position position="7"/>
    </location>
    <ligand>
        <name>Mg(2+)</name>
        <dbReference type="ChEBI" id="CHEBI:18420"/>
    </ligand>
</feature>
<feature type="binding site" evidence="1">
    <location>
        <position position="9"/>
    </location>
    <ligand>
        <name>Mg(2+)</name>
        <dbReference type="ChEBI" id="CHEBI:18420"/>
    </ligand>
</feature>
<feature type="binding site" evidence="1">
    <location>
        <position position="11"/>
    </location>
    <ligand>
        <name>substrate</name>
    </ligand>
</feature>
<feature type="binding site" evidence="1">
    <location>
        <position position="55"/>
    </location>
    <ligand>
        <name>substrate</name>
    </ligand>
</feature>
<feature type="binding site" evidence="1">
    <location>
        <position position="57"/>
    </location>
    <ligand>
        <name>substrate</name>
    </ligand>
</feature>
<feature type="binding site" evidence="1">
    <location>
        <position position="65"/>
    </location>
    <ligand>
        <name>substrate</name>
    </ligand>
</feature>
<feature type="binding site" evidence="1">
    <location>
        <position position="125"/>
    </location>
    <ligand>
        <name>substrate</name>
    </ligand>
</feature>
<feature type="binding site" evidence="1">
    <location>
        <position position="145"/>
    </location>
    <ligand>
        <name>Mg(2+)</name>
        <dbReference type="ChEBI" id="CHEBI:18420"/>
    </ligand>
</feature>
<feature type="binding site" evidence="1">
    <location>
        <position position="157"/>
    </location>
    <ligand>
        <name>Mg(2+)</name>
        <dbReference type="ChEBI" id="CHEBI:18420"/>
    </ligand>
</feature>
<feature type="binding site" evidence="1">
    <location>
        <position position="157"/>
    </location>
    <ligand>
        <name>substrate</name>
    </ligand>
</feature>
<feature type="binding site" evidence="1">
    <location>
        <position position="159"/>
    </location>
    <ligand>
        <name>Mg(2+)</name>
        <dbReference type="ChEBI" id="CHEBI:18420"/>
    </ligand>
</feature>
<feature type="binding site" evidence="1">
    <location>
        <position position="193"/>
    </location>
    <ligand>
        <name>substrate</name>
    </ligand>
</feature>
<feature type="modified residue" description="N-acetylalanine" evidence="2">
    <location>
        <position position="2"/>
    </location>
</feature>
<accession>Q9BGW0</accession>
<evidence type="ECO:0000250" key="1"/>
<evidence type="ECO:0000250" key="2">
    <source>
        <dbReference type="UniProtKB" id="Q8MKF1"/>
    </source>
</evidence>
<evidence type="ECO:0000255" key="3">
    <source>
        <dbReference type="PROSITE-ProRule" id="PRU01044"/>
    </source>
</evidence>
<evidence type="ECO:0000305" key="4"/>
<reference key="1">
    <citation type="submission" date="2001-02" db="EMBL/GenBank/DDBJ databases">
        <title>Isolation of full-length cDNA clones from macaque brain cDNA libraries.</title>
        <authorList>
            <person name="Osada N."/>
            <person name="Hida M."/>
            <person name="Kusuda J."/>
            <person name="Tanuma R."/>
            <person name="Iseki K."/>
            <person name="Hirai M."/>
            <person name="Terao K."/>
            <person name="Suzuki Y."/>
            <person name="Sugano S."/>
            <person name="Hashimoto K."/>
        </authorList>
    </citation>
    <scope>NUCLEOTIDE SEQUENCE [LARGE SCALE MRNA]</scope>
    <source>
        <tissue>Frontal cortex</tissue>
    </source>
</reference>
<dbReference type="EC" id="3.6.1.28"/>
<dbReference type="EMBL" id="AB055296">
    <property type="protein sequence ID" value="BAB21921.1"/>
    <property type="molecule type" value="mRNA"/>
</dbReference>
<dbReference type="RefSeq" id="NP_001270466.1">
    <property type="nucleotide sequence ID" value="NM_001283537.1"/>
</dbReference>
<dbReference type="SMR" id="Q9BGW0"/>
<dbReference type="STRING" id="9541.ENSMFAP00000023375"/>
<dbReference type="eggNOG" id="ENOG502S5G9">
    <property type="taxonomic scope" value="Eukaryota"/>
</dbReference>
<dbReference type="Proteomes" id="UP000233100">
    <property type="component" value="Unplaced"/>
</dbReference>
<dbReference type="GO" id="GO:0005737">
    <property type="term" value="C:cytoplasm"/>
    <property type="evidence" value="ECO:0007669"/>
    <property type="project" value="UniProtKB-SubCell"/>
</dbReference>
<dbReference type="GO" id="GO:0000287">
    <property type="term" value="F:magnesium ion binding"/>
    <property type="evidence" value="ECO:0000250"/>
    <property type="project" value="UniProtKB"/>
</dbReference>
<dbReference type="GO" id="GO:0050333">
    <property type="term" value="F:thiamine triphosphate phosphatase activity"/>
    <property type="evidence" value="ECO:0000250"/>
    <property type="project" value="UniProtKB"/>
</dbReference>
<dbReference type="GO" id="GO:0042357">
    <property type="term" value="P:thiamine diphosphate metabolic process"/>
    <property type="evidence" value="ECO:0000250"/>
    <property type="project" value="UniProtKB"/>
</dbReference>
<dbReference type="GO" id="GO:0006772">
    <property type="term" value="P:thiamine metabolic process"/>
    <property type="evidence" value="ECO:0007669"/>
    <property type="project" value="InterPro"/>
</dbReference>
<dbReference type="CDD" id="cd07758">
    <property type="entry name" value="ThTPase"/>
    <property type="match status" value="1"/>
</dbReference>
<dbReference type="FunFam" id="2.40.320.10:FF:000005">
    <property type="entry name" value="Thiamine-triphosphatase"/>
    <property type="match status" value="1"/>
</dbReference>
<dbReference type="Gene3D" id="2.40.320.10">
    <property type="entry name" value="Hypothetical Protein Pfu-838710-001"/>
    <property type="match status" value="1"/>
</dbReference>
<dbReference type="InterPro" id="IPR033469">
    <property type="entry name" value="CYTH-like_dom_sf"/>
</dbReference>
<dbReference type="InterPro" id="IPR023577">
    <property type="entry name" value="CYTH_domain"/>
</dbReference>
<dbReference type="InterPro" id="IPR039582">
    <property type="entry name" value="THTPA"/>
</dbReference>
<dbReference type="InterPro" id="IPR012177">
    <property type="entry name" value="ThTPase_euk"/>
</dbReference>
<dbReference type="PANTHER" id="PTHR14586">
    <property type="entry name" value="THIAMINE-TRIPHOSPHATASE"/>
    <property type="match status" value="1"/>
</dbReference>
<dbReference type="PANTHER" id="PTHR14586:SF1">
    <property type="entry name" value="THIAMINE-TRIPHOSPHATASE"/>
    <property type="match status" value="1"/>
</dbReference>
<dbReference type="Pfam" id="PF01928">
    <property type="entry name" value="CYTH"/>
    <property type="match status" value="1"/>
</dbReference>
<dbReference type="PIRSF" id="PIRSF036561">
    <property type="entry name" value="ThTPase"/>
    <property type="match status" value="1"/>
</dbReference>
<dbReference type="SMART" id="SM01118">
    <property type="entry name" value="CYTH"/>
    <property type="match status" value="1"/>
</dbReference>
<dbReference type="SUPFAM" id="SSF55154">
    <property type="entry name" value="CYTH-like phosphatases"/>
    <property type="match status" value="1"/>
</dbReference>
<dbReference type="PROSITE" id="PS51707">
    <property type="entry name" value="CYTH"/>
    <property type="match status" value="1"/>
</dbReference>
<proteinExistence type="evidence at transcript level"/>
<comment type="function">
    <text evidence="1">Hydrolase highly specific for thiamine triphosphate (ThTP).</text>
</comment>
<comment type="catalytic activity">
    <reaction>
        <text>thiamine triphosphate + H2O = thiamine diphosphate + phosphate + H(+)</text>
        <dbReference type="Rhea" id="RHEA:11744"/>
        <dbReference type="ChEBI" id="CHEBI:15377"/>
        <dbReference type="ChEBI" id="CHEBI:15378"/>
        <dbReference type="ChEBI" id="CHEBI:43474"/>
        <dbReference type="ChEBI" id="CHEBI:58937"/>
        <dbReference type="ChEBI" id="CHEBI:58938"/>
        <dbReference type="EC" id="3.6.1.28"/>
    </reaction>
</comment>
<comment type="cofactor">
    <cofactor evidence="1">
        <name>Mg(2+)</name>
        <dbReference type="ChEBI" id="CHEBI:18420"/>
    </cofactor>
    <text evidence="1">Binds 1 Mg(2+) ion per subunit.</text>
</comment>
<comment type="subunit">
    <text evidence="1">Monomer.</text>
</comment>
<comment type="subcellular location">
    <subcellularLocation>
        <location evidence="1">Cytoplasm</location>
    </subcellularLocation>
</comment>
<comment type="similarity">
    <text evidence="4">Belongs to the ThTPase family.</text>
</comment>
<keyword id="KW-0007">Acetylation</keyword>
<keyword id="KW-0963">Cytoplasm</keyword>
<keyword id="KW-0378">Hydrolase</keyword>
<keyword id="KW-0460">Magnesium</keyword>
<keyword id="KW-0479">Metal-binding</keyword>
<keyword id="KW-1185">Reference proteome</keyword>
<organism>
    <name type="scientific">Macaca fascicularis</name>
    <name type="common">Crab-eating macaque</name>
    <name type="synonym">Cynomolgus monkey</name>
    <dbReference type="NCBI Taxonomy" id="9541"/>
    <lineage>
        <taxon>Eukaryota</taxon>
        <taxon>Metazoa</taxon>
        <taxon>Chordata</taxon>
        <taxon>Craniata</taxon>
        <taxon>Vertebrata</taxon>
        <taxon>Euteleostomi</taxon>
        <taxon>Mammalia</taxon>
        <taxon>Eutheria</taxon>
        <taxon>Euarchontoglires</taxon>
        <taxon>Primates</taxon>
        <taxon>Haplorrhini</taxon>
        <taxon>Catarrhini</taxon>
        <taxon>Cercopithecidae</taxon>
        <taxon>Cercopithecinae</taxon>
        <taxon>Macaca</taxon>
    </lineage>
</organism>
<protein>
    <recommendedName>
        <fullName>Thiamine-triphosphatase</fullName>
        <shortName>ThTPase</shortName>
        <ecNumber>3.6.1.28</ecNumber>
    </recommendedName>
</protein>